<evidence type="ECO:0000250" key="1"/>
<evidence type="ECO:0000256" key="2">
    <source>
        <dbReference type="SAM" id="MobiDB-lite"/>
    </source>
</evidence>
<evidence type="ECO:0000305" key="3"/>
<sequence>MAIQHKKGGGHRGRGSKTGRSRGRKFETSRLKDVREDESSGEEEDVDVQPAEDMNDSEGTDVSSESGLDEPPKENSYSTLLKLLNTDAKSNEPARKKRKIKANEPDANLVEVSIPTADDIEQMDEVADTEASASEDENMDDEGLPGEDYAEDIGTDGRNDMFELHFGNPDETELSQKIQACSKAWKSTKADLIDGLYSVVSMPDVEGNSSAIPEACWSVRLLTYRQLKQKLARNTVSFDRLNSCLTPYIFGYHDTFFCSRTTQNSAKLRDLYCLHALNHVLKTRDRVIKNSAILSREDNGDVELRDQGFTRPKVLIILPTRQACVRVINSFTKIYPMEQQENKKRFMDSFSAADSDEWAHKPDDFKELFGGNDDDMFRLGLKFTRKSLKFFSKFYSSDIILASPLGLRTAIEKEGGKKNENDFLSSIEMVIVDHADALIMQNWDHVEYIFSNLNLQPKEAHGCDFSRVRQWYLDGHGKFLRQTLVFSAFNTPELNALYNTQMQNVFGKAKIMSKYEGAMLNLRLPISVKQTFSRFDSASPLKDPEARFQYFTRTVLASLARGWTESSSRKKSGGTLIFIPSYLDFVRVRNHFANSSQTENISFGLISEYTSVRDSSRARSHFMNGRHSVLLYTERAHHFRRYNIRGVTNIVMYGLPDNPIFWGDLIEYLGSAAGGTATPTVRVLFSKWDALKLERIAGTARVRSMLLEKGGDTFTFV</sequence>
<gene>
    <name type="primary">UTP25</name>
    <name type="ORF">ARB_08018</name>
</gene>
<organism>
    <name type="scientific">Arthroderma benhamiae (strain ATCC MYA-4681 / CBS 112371)</name>
    <name type="common">Trichophyton mentagrophytes</name>
    <dbReference type="NCBI Taxonomy" id="663331"/>
    <lineage>
        <taxon>Eukaryota</taxon>
        <taxon>Fungi</taxon>
        <taxon>Dikarya</taxon>
        <taxon>Ascomycota</taxon>
        <taxon>Pezizomycotina</taxon>
        <taxon>Eurotiomycetes</taxon>
        <taxon>Eurotiomycetidae</taxon>
        <taxon>Onygenales</taxon>
        <taxon>Arthrodermataceae</taxon>
        <taxon>Trichophyton</taxon>
    </lineage>
</organism>
<dbReference type="EMBL" id="ABSU01000011">
    <property type="protein sequence ID" value="EFE33266.1"/>
    <property type="molecule type" value="Genomic_DNA"/>
</dbReference>
<dbReference type="RefSeq" id="XP_003013906.1">
    <property type="nucleotide sequence ID" value="XM_003013860.1"/>
</dbReference>
<dbReference type="STRING" id="663331.D4AUV1"/>
<dbReference type="GeneID" id="9521324"/>
<dbReference type="KEGG" id="abe:ARB_08018"/>
<dbReference type="eggNOG" id="KOG2340">
    <property type="taxonomic scope" value="Eukaryota"/>
</dbReference>
<dbReference type="HOGENOM" id="CLU_018705_0_1_1"/>
<dbReference type="OMA" id="QDRGDTF"/>
<dbReference type="Proteomes" id="UP000008866">
    <property type="component" value="Unassembled WGS sequence"/>
</dbReference>
<dbReference type="GO" id="GO:0005730">
    <property type="term" value="C:nucleolus"/>
    <property type="evidence" value="ECO:0007669"/>
    <property type="project" value="UniProtKB-SubCell"/>
</dbReference>
<dbReference type="GO" id="GO:0032040">
    <property type="term" value="C:small-subunit processome"/>
    <property type="evidence" value="ECO:0007669"/>
    <property type="project" value="TreeGrafter"/>
</dbReference>
<dbReference type="GO" id="GO:0019843">
    <property type="term" value="F:rRNA binding"/>
    <property type="evidence" value="ECO:0007669"/>
    <property type="project" value="TreeGrafter"/>
</dbReference>
<dbReference type="GO" id="GO:0034511">
    <property type="term" value="F:U3 snoRNA binding"/>
    <property type="evidence" value="ECO:0007669"/>
    <property type="project" value="InterPro"/>
</dbReference>
<dbReference type="GO" id="GO:0000462">
    <property type="term" value="P:maturation of SSU-rRNA from tricistronic rRNA transcript (SSU-rRNA, 5.8S rRNA, LSU-rRNA)"/>
    <property type="evidence" value="ECO:0007669"/>
    <property type="project" value="TreeGrafter"/>
</dbReference>
<dbReference type="FunFam" id="3.40.50.300:FF:002356">
    <property type="entry name" value="U3 small nucleolar RNA-associated protein 25"/>
    <property type="match status" value="1"/>
</dbReference>
<dbReference type="Gene3D" id="3.40.50.300">
    <property type="entry name" value="P-loop containing nucleotide triphosphate hydrolases"/>
    <property type="match status" value="1"/>
</dbReference>
<dbReference type="InterPro" id="IPR027417">
    <property type="entry name" value="P-loop_NTPase"/>
</dbReference>
<dbReference type="InterPro" id="IPR010678">
    <property type="entry name" value="UTP25"/>
</dbReference>
<dbReference type="InterPro" id="IPR053939">
    <property type="entry name" value="UTP25_C"/>
</dbReference>
<dbReference type="InterPro" id="IPR053940">
    <property type="entry name" value="UTP25_NTPase-like"/>
</dbReference>
<dbReference type="PANTHER" id="PTHR12933">
    <property type="entry name" value="ORF PROTEIN-RELATED"/>
    <property type="match status" value="1"/>
</dbReference>
<dbReference type="PANTHER" id="PTHR12933:SF0">
    <property type="entry name" value="U3 SMALL NUCLEOLAR RNA-ASSOCIATED PROTEIN 25 HOMOLOG"/>
    <property type="match status" value="1"/>
</dbReference>
<dbReference type="Pfam" id="PF06862">
    <property type="entry name" value="Utp25_C"/>
    <property type="match status" value="1"/>
</dbReference>
<dbReference type="Pfam" id="PF22916">
    <property type="entry name" value="UTP25_NTPase-like"/>
    <property type="match status" value="1"/>
</dbReference>
<dbReference type="SUPFAM" id="SSF52540">
    <property type="entry name" value="P-loop containing nucleoside triphosphate hydrolases"/>
    <property type="match status" value="1"/>
</dbReference>
<protein>
    <recommendedName>
        <fullName>U3 small nucleolar RNA-associated protein 25</fullName>
        <shortName>U3 snoRNA-associated protein 25</shortName>
    </recommendedName>
    <alternativeName>
        <fullName>U three protein 25</fullName>
    </alternativeName>
</protein>
<comment type="function">
    <text evidence="1">DEAD-box RNA helicase-like protein required for pre-18S rRNA processing, specifically at sites A0, A1, and A2.</text>
</comment>
<comment type="subunit">
    <text evidence="1">Component of the ribosomal small subunit (SSU) processome composed of at least 40 protein subunits and snoRNA U3.</text>
</comment>
<comment type="subcellular location">
    <subcellularLocation>
        <location evidence="1">Nucleus</location>
        <location evidence="1">Nucleolus</location>
    </subcellularLocation>
</comment>
<comment type="similarity">
    <text evidence="3">Belongs to the UTP25 family.</text>
</comment>
<reference key="1">
    <citation type="journal article" date="2011" name="Genome Biol.">
        <title>Comparative and functional genomics provide insights into the pathogenicity of dermatophytic fungi.</title>
        <authorList>
            <person name="Burmester A."/>
            <person name="Shelest E."/>
            <person name="Gloeckner G."/>
            <person name="Heddergott C."/>
            <person name="Schindler S."/>
            <person name="Staib P."/>
            <person name="Heidel A."/>
            <person name="Felder M."/>
            <person name="Petzold A."/>
            <person name="Szafranski K."/>
            <person name="Feuermann M."/>
            <person name="Pedruzzi I."/>
            <person name="Priebe S."/>
            <person name="Groth M."/>
            <person name="Winkler R."/>
            <person name="Li W."/>
            <person name="Kniemeyer O."/>
            <person name="Schroeckh V."/>
            <person name="Hertweck C."/>
            <person name="Hube B."/>
            <person name="White T.C."/>
            <person name="Platzer M."/>
            <person name="Guthke R."/>
            <person name="Heitman J."/>
            <person name="Woestemeyer J."/>
            <person name="Zipfel P.F."/>
            <person name="Monod M."/>
            <person name="Brakhage A.A."/>
        </authorList>
    </citation>
    <scope>NUCLEOTIDE SEQUENCE [LARGE SCALE GENOMIC DNA]</scope>
    <source>
        <strain>ATCC MYA-4681 / CBS 112371</strain>
    </source>
</reference>
<proteinExistence type="inferred from homology"/>
<feature type="chain" id="PRO_0000408096" description="U3 small nucleolar RNA-associated protein 25">
    <location>
        <begin position="1"/>
        <end position="717"/>
    </location>
</feature>
<feature type="region of interest" description="Disordered" evidence="2">
    <location>
        <begin position="1"/>
        <end position="147"/>
    </location>
</feature>
<feature type="compositionally biased region" description="Basic residues" evidence="2">
    <location>
        <begin position="1"/>
        <end position="23"/>
    </location>
</feature>
<feature type="compositionally biased region" description="Basic and acidic residues" evidence="2">
    <location>
        <begin position="24"/>
        <end position="38"/>
    </location>
</feature>
<feature type="compositionally biased region" description="Acidic residues" evidence="2">
    <location>
        <begin position="118"/>
        <end position="147"/>
    </location>
</feature>
<name>UTP25_ARTBC</name>
<accession>D4AUV1</accession>
<keyword id="KW-0539">Nucleus</keyword>
<keyword id="KW-1185">Reference proteome</keyword>
<keyword id="KW-0687">Ribonucleoprotein</keyword>
<keyword id="KW-0690">Ribosome biogenesis</keyword>
<keyword id="KW-0698">rRNA processing</keyword>